<gene>
    <name type="primary">Cebpz</name>
    <name type="synonym">Cbf2</name>
    <name type="synonym">Cebpa-rs1</name>
</gene>
<dbReference type="EMBL" id="U19891">
    <property type="protein sequence ID" value="AAB01503.1"/>
    <property type="status" value="ALT_FRAME"/>
    <property type="molecule type" value="mRNA"/>
</dbReference>
<dbReference type="EMBL" id="U19892">
    <property type="protein sequence ID" value="AAB01504.1"/>
    <property type="molecule type" value="mRNA"/>
</dbReference>
<dbReference type="EMBL" id="AK136173">
    <property type="protein sequence ID" value="BAE22857.1"/>
    <property type="molecule type" value="mRNA"/>
</dbReference>
<dbReference type="EMBL" id="AK158771">
    <property type="protein sequence ID" value="BAE34655.1"/>
    <property type="molecule type" value="mRNA"/>
</dbReference>
<dbReference type="EMBL" id="AK159081">
    <property type="protein sequence ID" value="BAE34799.1"/>
    <property type="status" value="ALT_FRAME"/>
    <property type="molecule type" value="mRNA"/>
</dbReference>
<dbReference type="CCDS" id="CCDS28981.1">
    <molecule id="P53569-1"/>
</dbReference>
<dbReference type="PIR" id="JC6067">
    <property type="entry name" value="JC6067"/>
</dbReference>
<dbReference type="RefSeq" id="NP_001019977.1">
    <property type="nucleotide sequence ID" value="NM_001024806.2"/>
</dbReference>
<dbReference type="SMR" id="P53569"/>
<dbReference type="BioGRID" id="198668">
    <property type="interactions" value="43"/>
</dbReference>
<dbReference type="CORUM" id="P53569"/>
<dbReference type="FunCoup" id="P53569">
    <property type="interactions" value="3522"/>
</dbReference>
<dbReference type="IntAct" id="P53569">
    <property type="interactions" value="1"/>
</dbReference>
<dbReference type="STRING" id="10090.ENSMUSP00000024885"/>
<dbReference type="iPTMnet" id="P53569"/>
<dbReference type="PhosphoSitePlus" id="P53569"/>
<dbReference type="jPOST" id="P53569"/>
<dbReference type="PaxDb" id="10090-ENSMUSP00000024885"/>
<dbReference type="PeptideAtlas" id="P53569"/>
<dbReference type="ProteomicsDB" id="281527">
    <molecule id="P53569-1"/>
</dbReference>
<dbReference type="ProteomicsDB" id="281528">
    <molecule id="P53569-2"/>
</dbReference>
<dbReference type="Pumba" id="P53569"/>
<dbReference type="DNASU" id="12607"/>
<dbReference type="GeneID" id="12607"/>
<dbReference type="KEGG" id="mmu:12607"/>
<dbReference type="UCSC" id="uc008dpk.1">
    <molecule id="P53569-1"/>
    <property type="organism name" value="mouse"/>
</dbReference>
<dbReference type="AGR" id="MGI:109386"/>
<dbReference type="CTD" id="10153"/>
<dbReference type="MGI" id="MGI:109386">
    <property type="gene designation" value="Cebpz"/>
</dbReference>
<dbReference type="eggNOG" id="KOG2038">
    <property type="taxonomic scope" value="Eukaryota"/>
</dbReference>
<dbReference type="InParanoid" id="P53569"/>
<dbReference type="OrthoDB" id="28947at2759"/>
<dbReference type="PhylomeDB" id="P53569"/>
<dbReference type="TreeFam" id="TF105010"/>
<dbReference type="BioGRID-ORCS" id="12607">
    <property type="hits" value="24 hits in 77 CRISPR screens"/>
</dbReference>
<dbReference type="ChiTaRS" id="Cebpz">
    <property type="organism name" value="mouse"/>
</dbReference>
<dbReference type="PRO" id="PR:P53569"/>
<dbReference type="Proteomes" id="UP000000589">
    <property type="component" value="Unplaced"/>
</dbReference>
<dbReference type="RNAct" id="P53569">
    <property type="molecule type" value="protein"/>
</dbReference>
<dbReference type="GO" id="GO:0016602">
    <property type="term" value="C:CCAAT-binding factor complex"/>
    <property type="evidence" value="ECO:0000266"/>
    <property type="project" value="MGI"/>
</dbReference>
<dbReference type="FunFam" id="1.25.10.10:FF:000805">
    <property type="entry name" value="Similar to transcription factor CBF/MAK21"/>
    <property type="match status" value="1"/>
</dbReference>
<dbReference type="InterPro" id="IPR016024">
    <property type="entry name" value="ARM-type_fold"/>
</dbReference>
<dbReference type="InterPro" id="IPR005612">
    <property type="entry name" value="CCAAT-binding_factor"/>
</dbReference>
<dbReference type="InterPro" id="IPR040155">
    <property type="entry name" value="CEBPZ/Mak21-like"/>
</dbReference>
<dbReference type="PANTHER" id="PTHR12048">
    <property type="entry name" value="CCAAT-BINDING FACTOR-RELATED"/>
    <property type="match status" value="1"/>
</dbReference>
<dbReference type="PANTHER" id="PTHR12048:SF0">
    <property type="entry name" value="CCAAT_ENHANCER-BINDING PROTEIN ZETA"/>
    <property type="match status" value="1"/>
</dbReference>
<dbReference type="Pfam" id="PF03914">
    <property type="entry name" value="CBF"/>
    <property type="match status" value="1"/>
</dbReference>
<dbReference type="SUPFAM" id="SSF48371">
    <property type="entry name" value="ARM repeat"/>
    <property type="match status" value="1"/>
</dbReference>
<keyword id="KW-0010">Activator</keyword>
<keyword id="KW-0025">Alternative splicing</keyword>
<keyword id="KW-0539">Nucleus</keyword>
<keyword id="KW-0597">Phosphoprotein</keyword>
<keyword id="KW-1185">Reference proteome</keyword>
<keyword id="KW-0804">Transcription</keyword>
<keyword id="KW-0805">Transcription regulation</keyword>
<organism>
    <name type="scientific">Mus musculus</name>
    <name type="common">Mouse</name>
    <dbReference type="NCBI Taxonomy" id="10090"/>
    <lineage>
        <taxon>Eukaryota</taxon>
        <taxon>Metazoa</taxon>
        <taxon>Chordata</taxon>
        <taxon>Craniata</taxon>
        <taxon>Vertebrata</taxon>
        <taxon>Euteleostomi</taxon>
        <taxon>Mammalia</taxon>
        <taxon>Eutheria</taxon>
        <taxon>Euarchontoglires</taxon>
        <taxon>Glires</taxon>
        <taxon>Rodentia</taxon>
        <taxon>Myomorpha</taxon>
        <taxon>Muroidea</taxon>
        <taxon>Muridae</taxon>
        <taxon>Murinae</taxon>
        <taxon>Mus</taxon>
        <taxon>Mus</taxon>
    </lineage>
</organism>
<feature type="chain" id="PRO_0000173471" description="CCAAT/enhancer-binding protein zeta">
    <location>
        <begin position="1"/>
        <end position="1052"/>
    </location>
</feature>
<feature type="region of interest" description="Disordered" evidence="2">
    <location>
        <begin position="1"/>
        <end position="40"/>
    </location>
</feature>
<feature type="region of interest" description="Disordered" evidence="2">
    <location>
        <begin position="122"/>
        <end position="158"/>
    </location>
</feature>
<feature type="region of interest" description="Disordered" evidence="2">
    <location>
        <begin position="621"/>
        <end position="677"/>
    </location>
</feature>
<feature type="region of interest" description="Disordered" evidence="2">
    <location>
        <begin position="876"/>
        <end position="969"/>
    </location>
</feature>
<feature type="region of interest" description="Disordered" evidence="2">
    <location>
        <begin position="1032"/>
        <end position="1052"/>
    </location>
</feature>
<feature type="compositionally biased region" description="Acidic residues" evidence="2">
    <location>
        <begin position="23"/>
        <end position="34"/>
    </location>
</feature>
<feature type="compositionally biased region" description="Basic and acidic residues" evidence="2">
    <location>
        <begin position="122"/>
        <end position="150"/>
    </location>
</feature>
<feature type="compositionally biased region" description="Acidic residues" evidence="2">
    <location>
        <begin position="627"/>
        <end position="643"/>
    </location>
</feature>
<feature type="compositionally biased region" description="Basic and acidic residues" evidence="2">
    <location>
        <begin position="644"/>
        <end position="677"/>
    </location>
</feature>
<feature type="compositionally biased region" description="Acidic residues" evidence="2">
    <location>
        <begin position="883"/>
        <end position="932"/>
    </location>
</feature>
<feature type="modified residue" description="Phosphoserine" evidence="6">
    <location>
        <position position="629"/>
    </location>
</feature>
<feature type="modified residue" description="Phosphoserine" evidence="5 6">
    <location>
        <position position="641"/>
    </location>
</feature>
<feature type="modified residue" description="Phosphoserine" evidence="1">
    <location>
        <position position="837"/>
    </location>
</feature>
<feature type="modified residue" description="Phosphoserine" evidence="1">
    <location>
        <position position="958"/>
    </location>
</feature>
<feature type="modified residue" description="Phosphoserine" evidence="1">
    <location>
        <position position="972"/>
    </location>
</feature>
<feature type="modified residue" description="Phosphoserine" evidence="1">
    <location>
        <position position="977"/>
    </location>
</feature>
<feature type="splice variant" id="VSP_000853" description="In isoform CBF2." evidence="3">
    <original>SELANKL</original>
    <variation>KRCWIQA</variation>
    <location>
        <begin position="455"/>
        <end position="461"/>
    </location>
</feature>
<feature type="splice variant" id="VSP_000854" description="In isoform CBF2." evidence="3">
    <location>
        <begin position="462"/>
        <end position="1052"/>
    </location>
</feature>
<feature type="sequence conflict" description="In Ref. 2; BAE22857/BAE34655." evidence="4" ref="2">
    <original>A</original>
    <variation>T</variation>
    <location>
        <position position="112"/>
    </location>
</feature>
<feature type="sequence conflict" description="In Ref. 2; BAE22857/BAE34655." evidence="4" ref="2">
    <original>A</original>
    <variation>P</variation>
    <location>
        <position position="146"/>
    </location>
</feature>
<feature type="sequence conflict" description="In Ref. 2; BAE22857/BAE34655." evidence="4" ref="2">
    <original>P</original>
    <variation>L</variation>
    <location>
        <position position="196"/>
    </location>
</feature>
<feature type="sequence conflict" description="In Ref. 2; BAE22857/BAE34655." evidence="4" ref="2">
    <original>M</original>
    <variation>L</variation>
    <location>
        <position position="318"/>
    </location>
</feature>
<feature type="sequence conflict" description="In Ref. 2; BAE22857/BAE34655." evidence="4" ref="2">
    <original>G</original>
    <variation>A</variation>
    <location>
        <position position="422"/>
    </location>
</feature>
<feature type="sequence conflict" description="In Ref. 1; AAB01503." evidence="4" ref="1">
    <original>T</original>
    <variation>S</variation>
    <location>
        <position position="471"/>
    </location>
</feature>
<feature type="sequence conflict" description="In Ref. 2; BAE22857/BAE34655." evidence="4" ref="2">
    <original>G</original>
    <variation>E</variation>
    <location>
        <position position="652"/>
    </location>
</feature>
<feature type="sequence conflict" description="In Ref. 2; BAE22857/BAE34655." evidence="4" ref="2">
    <original>T</original>
    <variation>A</variation>
    <location>
        <position position="875"/>
    </location>
</feature>
<comment type="function">
    <text>Stimulates transcription from the HSP70 promoter.</text>
</comment>
<comment type="subcellular location">
    <subcellularLocation>
        <location>Nucleus</location>
    </subcellularLocation>
</comment>
<comment type="alternative products">
    <event type="alternative splicing"/>
    <isoform>
        <id>P53569-1</id>
        <name>CBF1</name>
        <sequence type="displayed"/>
    </isoform>
    <isoform>
        <id>P53569-2</id>
        <name>CBF2</name>
        <sequence type="described" ref="VSP_000853 VSP_000854"/>
    </isoform>
</comment>
<comment type="tissue specificity">
    <text>Ubiquitous.</text>
</comment>
<comment type="similarity">
    <text evidence="4">Belongs to the CBF/MAK21 family.</text>
</comment>
<comment type="sequence caution" evidence="4">
    <conflict type="frameshift">
        <sequence resource="EMBL-CDS" id="AAB01503"/>
    </conflict>
</comment>
<comment type="sequence caution" evidence="4">
    <conflict type="frameshift">
        <sequence resource="EMBL-CDS" id="BAE34799"/>
    </conflict>
</comment>
<evidence type="ECO:0000250" key="1">
    <source>
        <dbReference type="UniProtKB" id="Q03701"/>
    </source>
</evidence>
<evidence type="ECO:0000256" key="2">
    <source>
        <dbReference type="SAM" id="MobiDB-lite"/>
    </source>
</evidence>
<evidence type="ECO:0000303" key="3">
    <source>
    </source>
</evidence>
<evidence type="ECO:0000305" key="4"/>
<evidence type="ECO:0007744" key="5">
    <source>
    </source>
</evidence>
<evidence type="ECO:0007744" key="6">
    <source>
    </source>
</evidence>
<protein>
    <recommendedName>
        <fullName>CCAAT/enhancer-binding protein zeta</fullName>
    </recommendedName>
    <alternativeName>
        <fullName>CCAAT-box-binding transcription factor</fullName>
        <shortName>CBF</shortName>
        <shortName>CCAAT-binding factor</shortName>
    </alternativeName>
</protein>
<accession>P53569</accession>
<accession>Q3TXW5</accession>
<accession>Q3TYA8</accession>
<accession>Q3UWQ7</accession>
<reference key="1">
    <citation type="journal article" date="1996" name="Nucleic Acids Res.">
        <title>Cloning and characterization of mouse CCAAT binding factor.</title>
        <authorList>
            <person name="Hoeppner M.A."/>
            <person name="Gilbert D.J."/>
            <person name="Copeland N.G."/>
            <person name="Jenkins N.A."/>
            <person name="Linzer D.I.H."/>
            <person name="Wu B."/>
        </authorList>
    </citation>
    <scope>NUCLEOTIDE SEQUENCE [MRNA] (ISOFORMS CBF1 AND CBF2)</scope>
    <source>
        <strain>BALB/cJ</strain>
    </source>
</reference>
<reference key="2">
    <citation type="journal article" date="2005" name="Science">
        <title>The transcriptional landscape of the mammalian genome.</title>
        <authorList>
            <person name="Carninci P."/>
            <person name="Kasukawa T."/>
            <person name="Katayama S."/>
            <person name="Gough J."/>
            <person name="Frith M.C."/>
            <person name="Maeda N."/>
            <person name="Oyama R."/>
            <person name="Ravasi T."/>
            <person name="Lenhard B."/>
            <person name="Wells C."/>
            <person name="Kodzius R."/>
            <person name="Shimokawa K."/>
            <person name="Bajic V.B."/>
            <person name="Brenner S.E."/>
            <person name="Batalov S."/>
            <person name="Forrest A.R."/>
            <person name="Zavolan M."/>
            <person name="Davis M.J."/>
            <person name="Wilming L.G."/>
            <person name="Aidinis V."/>
            <person name="Allen J.E."/>
            <person name="Ambesi-Impiombato A."/>
            <person name="Apweiler R."/>
            <person name="Aturaliya R.N."/>
            <person name="Bailey T.L."/>
            <person name="Bansal M."/>
            <person name="Baxter L."/>
            <person name="Beisel K.W."/>
            <person name="Bersano T."/>
            <person name="Bono H."/>
            <person name="Chalk A.M."/>
            <person name="Chiu K.P."/>
            <person name="Choudhary V."/>
            <person name="Christoffels A."/>
            <person name="Clutterbuck D.R."/>
            <person name="Crowe M.L."/>
            <person name="Dalla E."/>
            <person name="Dalrymple B.P."/>
            <person name="de Bono B."/>
            <person name="Della Gatta G."/>
            <person name="di Bernardo D."/>
            <person name="Down T."/>
            <person name="Engstrom P."/>
            <person name="Fagiolini M."/>
            <person name="Faulkner G."/>
            <person name="Fletcher C.F."/>
            <person name="Fukushima T."/>
            <person name="Furuno M."/>
            <person name="Futaki S."/>
            <person name="Gariboldi M."/>
            <person name="Georgii-Hemming P."/>
            <person name="Gingeras T.R."/>
            <person name="Gojobori T."/>
            <person name="Green R.E."/>
            <person name="Gustincich S."/>
            <person name="Harbers M."/>
            <person name="Hayashi Y."/>
            <person name="Hensch T.K."/>
            <person name="Hirokawa N."/>
            <person name="Hill D."/>
            <person name="Huminiecki L."/>
            <person name="Iacono M."/>
            <person name="Ikeo K."/>
            <person name="Iwama A."/>
            <person name="Ishikawa T."/>
            <person name="Jakt M."/>
            <person name="Kanapin A."/>
            <person name="Katoh M."/>
            <person name="Kawasawa Y."/>
            <person name="Kelso J."/>
            <person name="Kitamura H."/>
            <person name="Kitano H."/>
            <person name="Kollias G."/>
            <person name="Krishnan S.P."/>
            <person name="Kruger A."/>
            <person name="Kummerfeld S.K."/>
            <person name="Kurochkin I.V."/>
            <person name="Lareau L.F."/>
            <person name="Lazarevic D."/>
            <person name="Lipovich L."/>
            <person name="Liu J."/>
            <person name="Liuni S."/>
            <person name="McWilliam S."/>
            <person name="Madan Babu M."/>
            <person name="Madera M."/>
            <person name="Marchionni L."/>
            <person name="Matsuda H."/>
            <person name="Matsuzawa S."/>
            <person name="Miki H."/>
            <person name="Mignone F."/>
            <person name="Miyake S."/>
            <person name="Morris K."/>
            <person name="Mottagui-Tabar S."/>
            <person name="Mulder N."/>
            <person name="Nakano N."/>
            <person name="Nakauchi H."/>
            <person name="Ng P."/>
            <person name="Nilsson R."/>
            <person name="Nishiguchi S."/>
            <person name="Nishikawa S."/>
            <person name="Nori F."/>
            <person name="Ohara O."/>
            <person name="Okazaki Y."/>
            <person name="Orlando V."/>
            <person name="Pang K.C."/>
            <person name="Pavan W.J."/>
            <person name="Pavesi G."/>
            <person name="Pesole G."/>
            <person name="Petrovsky N."/>
            <person name="Piazza S."/>
            <person name="Reed J."/>
            <person name="Reid J.F."/>
            <person name="Ring B.Z."/>
            <person name="Ringwald M."/>
            <person name="Rost B."/>
            <person name="Ruan Y."/>
            <person name="Salzberg S.L."/>
            <person name="Sandelin A."/>
            <person name="Schneider C."/>
            <person name="Schoenbach C."/>
            <person name="Sekiguchi K."/>
            <person name="Semple C.A."/>
            <person name="Seno S."/>
            <person name="Sessa L."/>
            <person name="Sheng Y."/>
            <person name="Shibata Y."/>
            <person name="Shimada H."/>
            <person name="Shimada K."/>
            <person name="Silva D."/>
            <person name="Sinclair B."/>
            <person name="Sperling S."/>
            <person name="Stupka E."/>
            <person name="Sugiura K."/>
            <person name="Sultana R."/>
            <person name="Takenaka Y."/>
            <person name="Taki K."/>
            <person name="Tammoja K."/>
            <person name="Tan S.L."/>
            <person name="Tang S."/>
            <person name="Taylor M.S."/>
            <person name="Tegner J."/>
            <person name="Teichmann S.A."/>
            <person name="Ueda H.R."/>
            <person name="van Nimwegen E."/>
            <person name="Verardo R."/>
            <person name="Wei C.L."/>
            <person name="Yagi K."/>
            <person name="Yamanishi H."/>
            <person name="Zabarovsky E."/>
            <person name="Zhu S."/>
            <person name="Zimmer A."/>
            <person name="Hide W."/>
            <person name="Bult C."/>
            <person name="Grimmond S.M."/>
            <person name="Teasdale R.D."/>
            <person name="Liu E.T."/>
            <person name="Brusic V."/>
            <person name="Quackenbush J."/>
            <person name="Wahlestedt C."/>
            <person name="Mattick J.S."/>
            <person name="Hume D.A."/>
            <person name="Kai C."/>
            <person name="Sasaki D."/>
            <person name="Tomaru Y."/>
            <person name="Fukuda S."/>
            <person name="Kanamori-Katayama M."/>
            <person name="Suzuki M."/>
            <person name="Aoki J."/>
            <person name="Arakawa T."/>
            <person name="Iida J."/>
            <person name="Imamura K."/>
            <person name="Itoh M."/>
            <person name="Kato T."/>
            <person name="Kawaji H."/>
            <person name="Kawagashira N."/>
            <person name="Kawashima T."/>
            <person name="Kojima M."/>
            <person name="Kondo S."/>
            <person name="Konno H."/>
            <person name="Nakano K."/>
            <person name="Ninomiya N."/>
            <person name="Nishio T."/>
            <person name="Okada M."/>
            <person name="Plessy C."/>
            <person name="Shibata K."/>
            <person name="Shiraki T."/>
            <person name="Suzuki S."/>
            <person name="Tagami M."/>
            <person name="Waki K."/>
            <person name="Watahiki A."/>
            <person name="Okamura-Oho Y."/>
            <person name="Suzuki H."/>
            <person name="Kawai J."/>
            <person name="Hayashizaki Y."/>
        </authorList>
    </citation>
    <scope>NUCLEOTIDE SEQUENCE [LARGE SCALE MRNA] (ISOFORM CBF1)</scope>
    <source>
        <strain>C57BL/6J</strain>
        <strain>CD-1</strain>
        <tissue>Egg</tissue>
        <tissue>Rathke gland</tissue>
        <tissue>Visual cortex</tissue>
    </source>
</reference>
<reference key="3">
    <citation type="journal article" date="2007" name="Proc. Natl. Acad. Sci. U.S.A.">
        <title>Large-scale phosphorylation analysis of mouse liver.</title>
        <authorList>
            <person name="Villen J."/>
            <person name="Beausoleil S.A."/>
            <person name="Gerber S.A."/>
            <person name="Gygi S.P."/>
        </authorList>
    </citation>
    <scope>PHOSPHORYLATION [LARGE SCALE ANALYSIS] AT SER-641</scope>
    <scope>IDENTIFICATION BY MASS SPECTROMETRY [LARGE SCALE ANALYSIS]</scope>
    <source>
        <tissue>Liver</tissue>
    </source>
</reference>
<reference key="4">
    <citation type="journal article" date="2010" name="Cell">
        <title>A tissue-specific atlas of mouse protein phosphorylation and expression.</title>
        <authorList>
            <person name="Huttlin E.L."/>
            <person name="Jedrychowski M.P."/>
            <person name="Elias J.E."/>
            <person name="Goswami T."/>
            <person name="Rad R."/>
            <person name="Beausoleil S.A."/>
            <person name="Villen J."/>
            <person name="Haas W."/>
            <person name="Sowa M.E."/>
            <person name="Gygi S.P."/>
        </authorList>
    </citation>
    <scope>PHOSPHORYLATION [LARGE SCALE ANALYSIS] AT SER-629 AND SER-641</scope>
    <scope>IDENTIFICATION BY MASS SPECTROMETRY [LARGE SCALE ANALYSIS]</scope>
    <source>
        <tissue>Brain</tissue>
        <tissue>Heart</tissue>
        <tissue>Kidney</tissue>
        <tissue>Liver</tissue>
        <tissue>Lung</tissue>
        <tissue>Spleen</tissue>
        <tissue>Testis</tissue>
    </source>
</reference>
<name>CEBPZ_MOUSE</name>
<sequence>MSADQEPVAFLAKQPWRPKQVTEDPDEEDEEDGDEGKNGFSLEEVLRLGGTKQDYLMLATLDENEEVVDGGKKGTIDDLQQGELESFIQNLNLAKYSKSLIEEDEPEKKENASKKEAKLLKVENKKQKATEGKKTSEKKVKNKTVAEQRPESCPVSKAKKDKQPDVFEFLERQTMLLRPGGKWYDMEYSGEYSLEPQPPDVVSKYKALAQKLYEHEVSLFKSKTNNQKGGSSTWMKAIVSSGTLADRMAAMILLIQDDAVHTLQFVETLMSLVKKKGSKQQCLMALDTFKELLITDLLPDSRKLRVFSQHPFHKLEEMSSGNKDSRDRRLILWYYEHQLKHLVAEFVQVLETLSHDSLVTTKTRALVAAHELLCDKPEEEKALLVQVINKLGDPQNRIATKASHLLEVLLRKHPNMKGVVCGEIERLLFRSNISPKAQYYAICFLNQMVLSHEESELANKLITLYFCFFRTCIKKKDIESKMLSAILTGVNRAYPYSQIGDDKVREQVDTLFKVLHVVNFNTSVQALMLLFQVMNSQQTISDRYYTALYRKMLDPGLTTCSKQAMFLNLIYKSLKADIMLRRVKAFVKRLLQVTCTQMPPFICGALYLVSEILKAKPDLRSQLDDHPESDEENFVDVGDDSDDEKFTDADKGTATDAVKEVESKETEPESSAEAEKPKAASWVHFDNLKGGKQIKTYDPFSRNPLFCGAENTTLWELKKLSEHFHPSVALFAKTILEGNCIQYSGDPLQDFTLMRFLDRFVYRNPKLHKGKENTDSVVMQPKRKHFMKNVRDLAVNSKEFLAKEESQIPVDEVFFYRYYKKVAVVKDKQKRSADEESIEDIDDEEFENMIDTFEDDNCFPPGKDDIDFASNMKKTKGAKADLEDSESSDGELGDLDDDEVSLGSMNDEDFEIDEDGGTFMDVSDDESEDAPEFADANPKANTKKSKRKSEDDFDFAGSFQGQKKKKKSFNDSSLFVSAEEFGHLLDENMGSKFDTIGMNAMANRDNASFKQLKWEAERDDWLHNRDVKSIIKKKKNFRKKMKAPQKPKRQRK</sequence>
<proteinExistence type="evidence at protein level"/>